<feature type="chain" id="PRO_0000088698" description="Transmembrane protease serine 13">
    <location>
        <begin position="1"/>
        <end position="586"/>
    </location>
</feature>
<feature type="topological domain" description="Cytoplasmic" evidence="3">
    <location>
        <begin position="1"/>
        <end position="165"/>
    </location>
</feature>
<feature type="transmembrane region" description="Helical; Signal-anchor for type II membrane protein" evidence="3">
    <location>
        <begin position="166"/>
        <end position="186"/>
    </location>
</feature>
<feature type="topological domain" description="Extracellular" evidence="3">
    <location>
        <begin position="187"/>
        <end position="586"/>
    </location>
</feature>
<feature type="repeat" description="1-1">
    <location>
        <begin position="9"/>
        <end position="13"/>
    </location>
</feature>
<feature type="repeat" description="2-1; approximate">
    <location>
        <begin position="14"/>
        <end position="18"/>
    </location>
</feature>
<feature type="repeat" description="1-2">
    <location>
        <begin position="19"/>
        <end position="23"/>
    </location>
</feature>
<feature type="repeat" description="1-3">
    <location>
        <begin position="24"/>
        <end position="28"/>
    </location>
</feature>
<feature type="repeat" description="2-2">
    <location>
        <begin position="29"/>
        <end position="33"/>
    </location>
</feature>
<feature type="repeat" description="1-4">
    <location>
        <begin position="34"/>
        <end position="38"/>
    </location>
</feature>
<feature type="repeat" description="1-5">
    <location>
        <begin position="39"/>
        <end position="43"/>
    </location>
</feature>
<feature type="repeat" description="1-6">
    <location>
        <begin position="44"/>
        <end position="48"/>
    </location>
</feature>
<feature type="repeat" description="2-3">
    <location>
        <begin position="49"/>
        <end position="53"/>
    </location>
</feature>
<feature type="repeat" description="1-7">
    <location>
        <begin position="54"/>
        <end position="58"/>
    </location>
</feature>
<feature type="repeat" description="1-8">
    <location>
        <begin position="59"/>
        <end position="63"/>
    </location>
</feature>
<feature type="repeat" description="2-4">
    <location>
        <begin position="64"/>
        <end position="68"/>
    </location>
</feature>
<feature type="repeat" description="1-9; approximate">
    <location>
        <begin position="69"/>
        <end position="78"/>
    </location>
</feature>
<feature type="repeat" description="1-10">
    <location>
        <begin position="79"/>
        <end position="83"/>
    </location>
</feature>
<feature type="repeat" description="1-11">
    <location>
        <begin position="84"/>
        <end position="88"/>
    </location>
</feature>
<feature type="repeat" description="1-12">
    <location>
        <begin position="89"/>
        <end position="93"/>
    </location>
</feature>
<feature type="domain" description="SRCR" evidence="4">
    <location>
        <begin position="195"/>
        <end position="325"/>
    </location>
</feature>
<feature type="domain" description="LDL-receptor class A">
    <location>
        <begin position="204"/>
        <end position="226"/>
    </location>
</feature>
<feature type="domain" description="Peptidase S1" evidence="5">
    <location>
        <begin position="326"/>
        <end position="559"/>
    </location>
</feature>
<feature type="region of interest" description="Disordered" evidence="6">
    <location>
        <begin position="1"/>
        <end position="115"/>
    </location>
</feature>
<feature type="region of interest" description="13 X 5 AA repeats of A-S-P-A-[GLQR]">
    <location>
        <begin position="9"/>
        <end position="93"/>
    </location>
</feature>
<feature type="region of interest" description="4 X 5 AA repeats of T-P-P-G-R">
    <location>
        <begin position="14"/>
        <end position="68"/>
    </location>
</feature>
<feature type="region of interest" description="Disordered" evidence="6">
    <location>
        <begin position="131"/>
        <end position="157"/>
    </location>
</feature>
<feature type="region of interest" description="Disordered" evidence="6">
    <location>
        <begin position="565"/>
        <end position="586"/>
    </location>
</feature>
<feature type="compositionally biased region" description="Low complexity" evidence="6">
    <location>
        <begin position="14"/>
        <end position="52"/>
    </location>
</feature>
<feature type="compositionally biased region" description="Low complexity" evidence="6">
    <location>
        <begin position="69"/>
        <end position="111"/>
    </location>
</feature>
<feature type="compositionally biased region" description="Low complexity" evidence="6">
    <location>
        <begin position="133"/>
        <end position="144"/>
    </location>
</feature>
<feature type="compositionally biased region" description="Polar residues" evidence="6">
    <location>
        <begin position="565"/>
        <end position="574"/>
    </location>
</feature>
<feature type="compositionally biased region" description="Gly residues" evidence="6">
    <location>
        <begin position="575"/>
        <end position="586"/>
    </location>
</feature>
<feature type="active site" description="Charge relay system" evidence="1">
    <location>
        <position position="366"/>
    </location>
</feature>
<feature type="active site" description="Charge relay system" evidence="1">
    <location>
        <position position="414"/>
    </location>
</feature>
<feature type="active site" description="Charge relay system" evidence="10 11">
    <location>
        <position position="511"/>
    </location>
</feature>
<feature type="site" description="Cleavage; by autolysis; required for cell surface localization and secretion" evidence="11">
    <location>
        <begin position="228"/>
        <end position="229"/>
    </location>
</feature>
<feature type="site" description="Required for autocleavage and PRSS8 cleavage" evidence="10 11">
    <location>
        <position position="325"/>
    </location>
</feature>
<feature type="glycosylation site" description="N-linked (GlcNAc...) asparagine" evidence="3">
    <location>
        <position position="255"/>
    </location>
</feature>
<feature type="glycosylation site" description="N-linked (GlcNAc...) asparagine" evidence="3">
    <location>
        <position position="292"/>
    </location>
</feature>
<feature type="glycosylation site" description="N-linked (GlcNAc...) asparagine" evidence="10">
    <location>
        <position position="405"/>
    </location>
</feature>
<feature type="glycosylation site" description="N-linked (GlcNAc...) asparagine" evidence="10">
    <location>
        <position position="445"/>
    </location>
</feature>
<feature type="disulfide bond" evidence="1">
    <location>
        <begin position="250"/>
        <end position="314"/>
    </location>
</feature>
<feature type="disulfide bond" evidence="1">
    <location>
        <begin position="263"/>
        <end position="317"/>
    </location>
</feature>
<feature type="disulfide bond" evidence="1">
    <location>
        <begin position="351"/>
        <end position="367"/>
    </location>
</feature>
<feature type="disulfide bond" evidence="1">
    <location>
        <begin position="448"/>
        <end position="517"/>
    </location>
</feature>
<feature type="disulfide bond" evidence="1">
    <location>
        <begin position="480"/>
        <end position="496"/>
    </location>
</feature>
<feature type="disulfide bond" evidence="1">
    <location>
        <begin position="507"/>
        <end position="535"/>
    </location>
</feature>
<feature type="splice variant" id="VSP_013099" description="In isoform 3." evidence="12 13">
    <original>GTSLPKFTWREGQKQLPLIGCVLLLIALVVSLIILF</original>
    <variation>V</variation>
    <location>
        <begin position="151"/>
        <end position="186"/>
    </location>
</feature>
<feature type="splice variant" id="VSP_013100" description="In isoform 4." evidence="13">
    <original>AHIHPACLPMHGQTFSLNETCWITGFGKTRETDDKTSPFLREVQVNLIDFKKCNDYLVYDSYLT</original>
    <variation>GEGICTPRSPAPQPQHPLQPSHLSASVNSYPGPKASAGQKSKTLKDPYMEHFCFIIRETEAQGL</variation>
    <location>
        <begin position="428"/>
        <end position="491"/>
    </location>
</feature>
<feature type="splice variant" id="VSP_013101" description="In isoform 4." evidence="13">
    <location>
        <begin position="492"/>
        <end position="586"/>
    </location>
</feature>
<feature type="splice variant" id="VSP_013102" description="In isoform 3 and isoform 6." evidence="12 14">
    <original>VRSLQQDTAPSRLGTSSGGDPGGAPRL</original>
    <variation>SEVRFRKS</variation>
    <location>
        <begin position="560"/>
        <end position="586"/>
    </location>
</feature>
<feature type="splice variant" id="VSP_013103" description="In isoform 2." evidence="15">
    <original>VRSL</original>
    <variation>SSAG</variation>
    <location>
        <begin position="560"/>
        <end position="563"/>
    </location>
</feature>
<feature type="splice variant" id="VSP_013104" description="In isoform 2." evidence="15">
    <location>
        <begin position="564"/>
        <end position="586"/>
    </location>
</feature>
<feature type="sequence variant" id="VAR_081354" evidence="12">
    <original>R</original>
    <variation>RASPAQ</variation>
    <location>
        <position position="73"/>
    </location>
</feature>
<feature type="sequence variant" id="VAR_081355" evidence="12 14 15">
    <location>
        <begin position="74"/>
        <end position="78"/>
    </location>
</feature>
<feature type="mutagenesis site" description="No effect on autocleavage." evidence="11">
    <original>R</original>
    <variation>Q</variation>
    <location>
        <position position="196"/>
    </location>
</feature>
<feature type="mutagenesis site" description="No effect on autocleavage." evidence="11">
    <original>R</original>
    <variation>Q</variation>
    <location>
        <position position="201"/>
    </location>
</feature>
<feature type="mutagenesis site" description="No effect on autocleavage." evidence="11">
    <original>R</original>
    <variation>Q</variation>
    <location>
        <position position="210"/>
    </location>
</feature>
<feature type="mutagenesis site" description="Significantly reduces autocleavage and cleavage of substrates. Abolishes phosphorylation when inhibited by SPINT2/HAI-2, also reduces localization to the cell surface and is instead localized to the endoplasmic reticulum." evidence="11">
    <original>R</original>
    <variation>Q</variation>
    <location>
        <position position="228"/>
    </location>
</feature>
<feature type="mutagenesis site" description="No effect on autocleavage. No effect on PRSS8 cleavage and activation." evidence="10">
    <original>N</original>
    <variation>Q</variation>
    <location>
        <position position="255"/>
    </location>
</feature>
<feature type="mutagenesis site" description="No effect on autocleavage. No effect on PRSS8 cleavage and activation." evidence="10">
    <original>N</original>
    <variation>Q</variation>
    <location>
        <position position="292"/>
    </location>
</feature>
<feature type="mutagenesis site" description="Abolishes autocleavage. Abolishes PRSS8 cleavage and activation. Increases localization to the cell surface. No effect on glycosylation." evidence="9 10 11">
    <original>R</original>
    <variation>Q</variation>
    <location>
        <position position="325"/>
    </location>
</feature>
<feature type="mutagenesis site" description="Loss of localization to the cell surface even in the presence of the inhibitor SPINT2. Reduces PRSS8 cleavage and activation. No effect on interaction with SPINT2." evidence="10">
    <original>N</original>
    <variation>Q</variation>
    <location>
        <position position="405"/>
    </location>
</feature>
<feature type="mutagenesis site" description="Reduces autocleavage. Loss of localization to the cell surface even in the presence of the inhibitor SPINT2. Reduces PRSS8 cleavage and activation. No effect on interaction with SPINT2." evidence="10">
    <original>N</original>
    <variation>Q</variation>
    <location>
        <position position="445"/>
    </location>
</feature>
<feature type="mutagenesis site" description="Abolishes autocleavage. Abolishes serine protease activity including PRSS8 cleavage and activation. Increases localization to the cell surface. No effect on glycosylation." evidence="9 10 11">
    <original>S</original>
    <variation>A</variation>
    <location>
        <position position="511"/>
    </location>
</feature>
<feature type="sequence conflict" description="In Ref. 3; AAO38062." evidence="16" ref="3">
    <original>H</original>
    <variation>Y</variation>
    <location>
        <position position="192"/>
    </location>
</feature>
<feature type="sequence conflict" description="In Ref. 3; AAO38062." evidence="16" ref="3">
    <original>K</original>
    <variation>E</variation>
    <location>
        <position position="206"/>
    </location>
</feature>
<feature type="sequence conflict" description="In Ref. 3; AAO38062." evidence="16" ref="3">
    <original>C</original>
    <variation>R</variation>
    <location>
        <position position="211"/>
    </location>
</feature>
<feature type="sequence conflict" description="In Ref. 4; BAG62041." evidence="16" ref="4">
    <original>D</original>
    <variation>G</variation>
    <location>
        <position position="510"/>
    </location>
</feature>
<feature type="sequence conflict" description="In Ref. 1; BAB39741." evidence="16" ref="1">
    <original>L</original>
    <variation>V</variation>
    <location>
        <position position="586"/>
    </location>
</feature>
<accession>Q9BYE2</accession>
<accession>B4DTM9</accession>
<accession>E9PIJ5</accession>
<accession>E9PRA0</accession>
<accession>F8WAJ3</accession>
<accession>J3KQC6</accession>
<accession>Q1RMF8</accession>
<accession>Q86YM4</accession>
<accession>Q96JY8</accession>
<accession>Q9BYE1</accession>
<gene>
    <name type="primary">TMPRSS13</name>
    <name type="synonym">MSP</name>
    <name type="synonym">TMPRSS11</name>
</gene>
<reference key="1">
    <citation type="journal article" date="2001" name="Biochim. Biophys. Acta">
        <title>Cloning and expression of novel mosaic serine proteases with and without a transmembrane domain from human lung.</title>
        <authorList>
            <person name="Kim D.R."/>
            <person name="Sharmin S."/>
            <person name="Inoue M."/>
            <person name="Kido H."/>
        </authorList>
    </citation>
    <scope>NUCLEOTIDE SEQUENCE [MRNA] (ISOFORMS 1 AND 3)</scope>
    <scope>TISSUE SPECIFICITY (ISOFORMS 1 AND 2)</scope>
    <scope>POLYMORPHISM</scope>
    <scope>VARIANTS ALA-SER-PRO-ALA-GLN-73 INS AND 74-ALA--GLN-78 DEL</scope>
    <source>
        <tissue>Lung</tissue>
    </source>
</reference>
<reference key="2">
    <citation type="submission" date="2007-03" db="EMBL/GenBank/DDBJ databases">
        <authorList>
            <person name="Kim D.R."/>
            <person name="Inoue M."/>
            <person name="Kido H."/>
        </authorList>
    </citation>
    <scope>SEQUENCE REVISION TO 192; 259; 298 AND 496</scope>
</reference>
<reference key="3">
    <citation type="submission" date="2002-12" db="EMBL/GenBank/DDBJ databases">
        <title>Homo sapiens transmembrane protease, serine 6 (TMPRSS6) mRNA.</title>
        <authorList>
            <person name="Park T.J."/>
            <person name="Park W.J."/>
        </authorList>
    </citation>
    <scope>NUCLEOTIDE SEQUENCE [MRNA] (ISOFORM 2)</scope>
    <scope>VARIANT 74-ALA--GLN-78 DEL</scope>
</reference>
<reference key="4">
    <citation type="journal article" date="2004" name="Nat. Genet.">
        <title>Complete sequencing and characterization of 21,243 full-length human cDNAs.</title>
        <authorList>
            <person name="Ota T."/>
            <person name="Suzuki Y."/>
            <person name="Nishikawa T."/>
            <person name="Otsuki T."/>
            <person name="Sugiyama T."/>
            <person name="Irie R."/>
            <person name="Wakamatsu A."/>
            <person name="Hayashi K."/>
            <person name="Sato H."/>
            <person name="Nagai K."/>
            <person name="Kimura K."/>
            <person name="Makita H."/>
            <person name="Sekine M."/>
            <person name="Obayashi M."/>
            <person name="Nishi T."/>
            <person name="Shibahara T."/>
            <person name="Tanaka T."/>
            <person name="Ishii S."/>
            <person name="Yamamoto J."/>
            <person name="Saito K."/>
            <person name="Kawai Y."/>
            <person name="Isono Y."/>
            <person name="Nakamura Y."/>
            <person name="Nagahari K."/>
            <person name="Murakami K."/>
            <person name="Yasuda T."/>
            <person name="Iwayanagi T."/>
            <person name="Wagatsuma M."/>
            <person name="Shiratori A."/>
            <person name="Sudo H."/>
            <person name="Hosoiri T."/>
            <person name="Kaku Y."/>
            <person name="Kodaira H."/>
            <person name="Kondo H."/>
            <person name="Sugawara M."/>
            <person name="Takahashi M."/>
            <person name="Kanda K."/>
            <person name="Yokoi T."/>
            <person name="Furuya T."/>
            <person name="Kikkawa E."/>
            <person name="Omura Y."/>
            <person name="Abe K."/>
            <person name="Kamihara K."/>
            <person name="Katsuta N."/>
            <person name="Sato K."/>
            <person name="Tanikawa M."/>
            <person name="Yamazaki M."/>
            <person name="Ninomiya K."/>
            <person name="Ishibashi T."/>
            <person name="Yamashita H."/>
            <person name="Murakawa K."/>
            <person name="Fujimori K."/>
            <person name="Tanai H."/>
            <person name="Kimata M."/>
            <person name="Watanabe M."/>
            <person name="Hiraoka S."/>
            <person name="Chiba Y."/>
            <person name="Ishida S."/>
            <person name="Ono Y."/>
            <person name="Takiguchi S."/>
            <person name="Watanabe S."/>
            <person name="Yosida M."/>
            <person name="Hotuta T."/>
            <person name="Kusano J."/>
            <person name="Kanehori K."/>
            <person name="Takahashi-Fujii A."/>
            <person name="Hara H."/>
            <person name="Tanase T.-O."/>
            <person name="Nomura Y."/>
            <person name="Togiya S."/>
            <person name="Komai F."/>
            <person name="Hara R."/>
            <person name="Takeuchi K."/>
            <person name="Arita M."/>
            <person name="Imose N."/>
            <person name="Musashino K."/>
            <person name="Yuuki H."/>
            <person name="Oshima A."/>
            <person name="Sasaki N."/>
            <person name="Aotsuka S."/>
            <person name="Yoshikawa Y."/>
            <person name="Matsunawa H."/>
            <person name="Ichihara T."/>
            <person name="Shiohata N."/>
            <person name="Sano S."/>
            <person name="Moriya S."/>
            <person name="Momiyama H."/>
            <person name="Satoh N."/>
            <person name="Takami S."/>
            <person name="Terashima Y."/>
            <person name="Suzuki O."/>
            <person name="Nakagawa S."/>
            <person name="Senoh A."/>
            <person name="Mizoguchi H."/>
            <person name="Goto Y."/>
            <person name="Shimizu F."/>
            <person name="Wakebe H."/>
            <person name="Hishigaki H."/>
            <person name="Watanabe T."/>
            <person name="Sugiyama A."/>
            <person name="Takemoto M."/>
            <person name="Kawakami B."/>
            <person name="Yamazaki M."/>
            <person name="Watanabe K."/>
            <person name="Kumagai A."/>
            <person name="Itakura S."/>
            <person name="Fukuzumi Y."/>
            <person name="Fujimori Y."/>
            <person name="Komiyama M."/>
            <person name="Tashiro H."/>
            <person name="Tanigami A."/>
            <person name="Fujiwara T."/>
            <person name="Ono T."/>
            <person name="Yamada K."/>
            <person name="Fujii Y."/>
            <person name="Ozaki K."/>
            <person name="Hirao M."/>
            <person name="Ohmori Y."/>
            <person name="Kawabata A."/>
            <person name="Hikiji T."/>
            <person name="Kobatake N."/>
            <person name="Inagaki H."/>
            <person name="Ikema Y."/>
            <person name="Okamoto S."/>
            <person name="Okitani R."/>
            <person name="Kawakami T."/>
            <person name="Noguchi S."/>
            <person name="Itoh T."/>
            <person name="Shigeta K."/>
            <person name="Senba T."/>
            <person name="Matsumura K."/>
            <person name="Nakajima Y."/>
            <person name="Mizuno T."/>
            <person name="Morinaga M."/>
            <person name="Sasaki M."/>
            <person name="Togashi T."/>
            <person name="Oyama M."/>
            <person name="Hata H."/>
            <person name="Watanabe M."/>
            <person name="Komatsu T."/>
            <person name="Mizushima-Sugano J."/>
            <person name="Satoh T."/>
            <person name="Shirai Y."/>
            <person name="Takahashi Y."/>
            <person name="Nakagawa K."/>
            <person name="Okumura K."/>
            <person name="Nagase T."/>
            <person name="Nomura N."/>
            <person name="Kikuchi H."/>
            <person name="Masuho Y."/>
            <person name="Yamashita R."/>
            <person name="Nakai K."/>
            <person name="Yada T."/>
            <person name="Nakamura Y."/>
            <person name="Ohara O."/>
            <person name="Isogai T."/>
            <person name="Sugano S."/>
        </authorList>
    </citation>
    <scope>NUCLEOTIDE SEQUENCE [LARGE SCALE MRNA] (ISOFORMS 4 AND 6)</scope>
    <source>
        <tissue>Placenta</tissue>
    </source>
</reference>
<reference key="5">
    <citation type="journal article" date="2006" name="Nature">
        <title>Human chromosome 11 DNA sequence and analysis including novel gene identification.</title>
        <authorList>
            <person name="Taylor T.D."/>
            <person name="Noguchi H."/>
            <person name="Totoki Y."/>
            <person name="Toyoda A."/>
            <person name="Kuroki Y."/>
            <person name="Dewar K."/>
            <person name="Lloyd C."/>
            <person name="Itoh T."/>
            <person name="Takeda T."/>
            <person name="Kim D.-W."/>
            <person name="She X."/>
            <person name="Barlow K.F."/>
            <person name="Bloom T."/>
            <person name="Bruford E."/>
            <person name="Chang J.L."/>
            <person name="Cuomo C.A."/>
            <person name="Eichler E."/>
            <person name="FitzGerald M.G."/>
            <person name="Jaffe D.B."/>
            <person name="LaButti K."/>
            <person name="Nicol R."/>
            <person name="Park H.-S."/>
            <person name="Seaman C."/>
            <person name="Sougnez C."/>
            <person name="Yang X."/>
            <person name="Zimmer A.R."/>
            <person name="Zody M.C."/>
            <person name="Birren B.W."/>
            <person name="Nusbaum C."/>
            <person name="Fujiyama A."/>
            <person name="Hattori M."/>
            <person name="Rogers J."/>
            <person name="Lander E.S."/>
            <person name="Sakaki Y."/>
        </authorList>
    </citation>
    <scope>NUCLEOTIDE SEQUENCE [LARGE SCALE GENOMIC DNA]</scope>
</reference>
<reference key="6">
    <citation type="journal article" date="2004" name="Genome Res.">
        <title>The status, quality, and expansion of the NIH full-length cDNA project: the Mammalian Gene Collection (MGC).</title>
        <authorList>
            <consortium name="The MGC Project Team"/>
        </authorList>
    </citation>
    <scope>NUCLEOTIDE SEQUENCE [LARGE SCALE MRNA] (ISOFORM 6)</scope>
    <scope>VARIANT 74-ALA--GLN-78 DEL</scope>
</reference>
<reference key="7">
    <citation type="journal article" date="2010" name="FEBS J.">
        <title>TMPRSS13, a type II transmembrane serine protease, is inhibited by hepatocyte growth factor activator inhibitor type 1 and activates pro-hepatocyte growth factor.</title>
        <authorList>
            <person name="Hashimoto T."/>
            <person name="Kato M."/>
            <person name="Shimomura T."/>
            <person name="Kitamura N."/>
        </authorList>
    </citation>
    <scope>FUNCTION</scope>
    <scope>ACTIVITY REGULATION</scope>
    <scope>TISSUE SPECIFICITY</scope>
</reference>
<reference key="8">
    <citation type="journal article" date="2017" name="J. Biol. Chem.">
        <title>Phosphorylation of the type II transmembrane serine protease, TMPRSS13, in hepatocyte growth factor activator inhibitor-1 and -2-mediated cell-surface localization.</title>
        <authorList>
            <person name="Murray A.S."/>
            <person name="Varela F.A."/>
            <person name="Hyland T.E."/>
            <person name="Schoenbeck A.J."/>
            <person name="White J.M."/>
            <person name="Tanabe L.M."/>
            <person name="Todi S.V."/>
            <person name="List K."/>
        </authorList>
    </citation>
    <scope>FUNCTION</scope>
    <scope>INTERACTION WITH SPINT1 AND SPINT2</scope>
    <scope>SUBCELLULAR LOCATION</scope>
    <scope>PHOSPHORYLATION</scope>
    <scope>MUTAGENESIS OF ARG-325 AND SER-511</scope>
</reference>
<reference key="9">
    <citation type="journal article" date="2021" name="J. Biol. Chem.">
        <title>Posttranslational modifications of serine protease TMPRSS13 regulate zymogen activation, proteolytic activity, and cell surface localization.</title>
        <authorList>
            <person name="Martin C.E."/>
            <person name="Murray A.S."/>
            <person name="Sala-Hamrick K.E."/>
            <person name="Mackinder J.R."/>
            <person name="Harrison E.C."/>
            <person name="Lundgren J.G."/>
            <person name="Varela F.A."/>
            <person name="List K."/>
        </authorList>
    </citation>
    <scope>FUNCTION</scope>
    <scope>CATALYTIC ACTIVITY</scope>
    <scope>INTERACTION WITH SPINT2</scope>
    <scope>SUBCELLULAR LOCATION</scope>
    <scope>PROTEOLYTIC PROCESSING</scope>
    <scope>PHOSPHORYLATION</scope>
    <scope>GLYCOSYLATION AT ASN-405 AND ASN-445</scope>
    <scope>MUTAGENESIS OF ASN-255; ASN-292; ARG-325; ASN-405; ASN-445 AND SER-511</scope>
</reference>
<reference key="10">
    <citation type="journal article" date="2022" name="Biol. Chem.">
        <title>TMPRSS13 zymogen activation, surface localization, and shedding is regulated by proteolytic cleavage within the non-catalytic stem region.</title>
        <authorList>
            <person name="Martin C.E."/>
            <person name="Murray A.S."/>
            <person name="Mackinder J.R."/>
            <person name="Sala-Hamrick K.E."/>
            <person name="Flynn M.G."/>
            <person name="Lundgren J.G."/>
            <person name="Varela F.A."/>
            <person name="List K."/>
        </authorList>
    </citation>
    <scope>CATALYTIC ACTIVITY</scope>
    <scope>SUBCELLULAR LOCATION</scope>
    <scope>PHOSPHORYLATION</scope>
    <scope>MUTAGENESIS OF ARG-196; ARG-201; ARG-210; ARG-228; ARG-325 AND SER-511</scope>
</reference>
<sequence length="586" mass="63167">MERDSHGNASPARTPSAGASPAQASPAGTPPGRASPAQASPAQASPAGTPPGRASPAQASPAGTPPGRASPGRASPAQASPAQASPARASPALASLSRSSSGRSSSARSASVTTSPTRVYLVRATPVGAVPIRSSPARSAPATRATRESPGTSLPKFTWREGQKQLPLIGCVLLLIALVVSLIILFQFWQGHTGIRYKEQRESCPKHAVRCDGVVDCKLKSDELGCVRFDWDKSLLKIYSGSSHQWLPICSSNWNDSYSEKTCQQLGFESAHRTTEVAHRDFANSFSILRYNSTIQESLHRSECPSQRYISLQCSHCGLRAMTGRIVGGALASDSKWPWQVSLHFGTTHICGGTLIDAQWVLTAAHCFFVTREKVLEGWKVYAGTSNLHQLPEAASIAEIIINSNYTDEEDDYDIALMRLSKPLTLSAHIHPACLPMHGQTFSLNETCWITGFGKTRETDDKTSPFLREVQVNLIDFKKCNDYLVYDSYLTPRMMCAGDLRGGRDSCQGDSGGPLVCEQNNRWYLAGVTSWGTGCGQRNKPGVYTKVTEVLPWIYSKMEVRSLQQDTAPSRLGTSSGGDPGGAPRL</sequence>
<dbReference type="EC" id="3.4.21.-" evidence="10 11"/>
<dbReference type="EMBL" id="AB048796">
    <property type="protein sequence ID" value="BAB39741.2"/>
    <property type="molecule type" value="mRNA"/>
</dbReference>
<dbReference type="EMBL" id="AB048797">
    <property type="protein sequence ID" value="BAB39742.2"/>
    <property type="molecule type" value="mRNA"/>
</dbReference>
<dbReference type="EMBL" id="AY190317">
    <property type="protein sequence ID" value="AAO38062.1"/>
    <property type="molecule type" value="mRNA"/>
</dbReference>
<dbReference type="EMBL" id="AK027798">
    <property type="protein sequence ID" value="BAB55376.1"/>
    <property type="molecule type" value="mRNA"/>
</dbReference>
<dbReference type="EMBL" id="AK300283">
    <property type="protein sequence ID" value="BAG62041.1"/>
    <property type="molecule type" value="mRNA"/>
</dbReference>
<dbReference type="EMBL" id="AP002962">
    <property type="status" value="NOT_ANNOTATED_CDS"/>
    <property type="molecule type" value="Genomic_DNA"/>
</dbReference>
<dbReference type="EMBL" id="BC114928">
    <property type="protein sequence ID" value="AAI14929.1"/>
    <property type="molecule type" value="mRNA"/>
</dbReference>
<dbReference type="CCDS" id="CCDS41721.1">
    <molecule id="Q9BYE2-6"/>
</dbReference>
<dbReference type="CCDS" id="CCDS55788.1">
    <molecule id="Q9BYE2-3"/>
</dbReference>
<dbReference type="CCDS" id="CCDS55789.1">
    <molecule id="Q9BYE2-4"/>
</dbReference>
<dbReference type="CCDS" id="CCDS58185.1">
    <molecule id="Q9BYE2-2"/>
</dbReference>
<dbReference type="RefSeq" id="NP_001070731.1">
    <molecule id="Q9BYE2-6"/>
    <property type="nucleotide sequence ID" value="NM_001077263.3"/>
</dbReference>
<dbReference type="RefSeq" id="NP_001193718.1">
    <molecule id="Q9BYE2-3"/>
    <property type="nucleotide sequence ID" value="NM_001206789.2"/>
</dbReference>
<dbReference type="RefSeq" id="NP_001193719.1">
    <molecule id="Q9BYE2-4"/>
    <property type="nucleotide sequence ID" value="NM_001206790.2"/>
</dbReference>
<dbReference type="RefSeq" id="NP_001231924.1">
    <molecule id="Q9BYE2-2"/>
    <property type="nucleotide sequence ID" value="NM_001244995.2"/>
</dbReference>
<dbReference type="SMR" id="Q9BYE2"/>
<dbReference type="BioGRID" id="123845">
    <property type="interactions" value="141"/>
</dbReference>
<dbReference type="FunCoup" id="Q9BYE2">
    <property type="interactions" value="66"/>
</dbReference>
<dbReference type="IntAct" id="Q9BYE2">
    <property type="interactions" value="102"/>
</dbReference>
<dbReference type="STRING" id="9606.ENSP00000434279"/>
<dbReference type="MEROPS" id="S01.087"/>
<dbReference type="TCDB" id="8.A.131.1.13">
    <property type="family name" value="the transmembrane protease serine 3 (tmprss3) family"/>
</dbReference>
<dbReference type="GlyCosmos" id="Q9BYE2">
    <property type="glycosylation" value="4 sites, No reported glycans"/>
</dbReference>
<dbReference type="GlyGen" id="Q9BYE2">
    <property type="glycosylation" value="8 sites, 1 O-linked glycan (1 site)"/>
</dbReference>
<dbReference type="iPTMnet" id="Q9BYE2"/>
<dbReference type="PhosphoSitePlus" id="Q9BYE2"/>
<dbReference type="SwissPalm" id="Q9BYE2"/>
<dbReference type="BioMuta" id="TMPRSS13"/>
<dbReference type="DMDM" id="313104278"/>
<dbReference type="jPOST" id="Q9BYE2"/>
<dbReference type="MassIVE" id="Q9BYE2"/>
<dbReference type="PaxDb" id="9606-ENSP00000434279"/>
<dbReference type="PeptideAtlas" id="Q9BYE2"/>
<dbReference type="ProteomicsDB" id="20829"/>
<dbReference type="ProteomicsDB" id="23254"/>
<dbReference type="ProteomicsDB" id="30511"/>
<dbReference type="ProteomicsDB" id="79624">
    <molecule id="Q9BYE2-1"/>
</dbReference>
<dbReference type="ProteomicsDB" id="79625">
    <molecule id="Q9BYE2-2"/>
</dbReference>
<dbReference type="ProteomicsDB" id="79626">
    <molecule id="Q9BYE2-3"/>
</dbReference>
<dbReference type="ProteomicsDB" id="79627">
    <molecule id="Q9BYE2-4"/>
</dbReference>
<dbReference type="Antibodypedia" id="32401">
    <property type="antibodies" value="91 antibodies from 18 providers"/>
</dbReference>
<dbReference type="DNASU" id="84000"/>
<dbReference type="Ensembl" id="ENST00000430170.6">
    <molecule id="Q9BYE2-2"/>
    <property type="protein sequence ID" value="ENSP00000387702.2"/>
    <property type="gene ID" value="ENSG00000137747.16"/>
</dbReference>
<dbReference type="Ensembl" id="ENST00000445164.6">
    <molecule id="Q9BYE2-1"/>
    <property type="protein sequence ID" value="ENSP00000394114.2"/>
    <property type="gene ID" value="ENSG00000137747.16"/>
</dbReference>
<dbReference type="Ensembl" id="ENST00000524993.6">
    <molecule id="Q9BYE2-6"/>
    <property type="protein sequence ID" value="ENSP00000434279.1"/>
    <property type="gene ID" value="ENSG00000137747.16"/>
</dbReference>
<dbReference type="Ensembl" id="ENST00000526090.1">
    <molecule id="Q9BYE2-4"/>
    <property type="protein sequence ID" value="ENSP00000436502.1"/>
    <property type="gene ID" value="ENSG00000137747.16"/>
</dbReference>
<dbReference type="Ensembl" id="ENST00000528626.5">
    <molecule id="Q9BYE2-3"/>
    <property type="protein sequence ID" value="ENSP00000435813.1"/>
    <property type="gene ID" value="ENSG00000137747.16"/>
</dbReference>
<dbReference type="GeneID" id="84000"/>
<dbReference type="KEGG" id="hsa:84000"/>
<dbReference type="MANE-Select" id="ENST00000524993.6">
    <molecule id="Q9BYE2-6"/>
    <property type="protein sequence ID" value="ENSP00000434279.1"/>
    <property type="RefSeq nucleotide sequence ID" value="NM_001077263.3"/>
    <property type="RefSeq protein sequence ID" value="NP_001070731.1"/>
</dbReference>
<dbReference type="UCSC" id="uc001pru.3">
    <molecule id="Q9BYE2-1"/>
    <property type="organism name" value="human"/>
</dbReference>
<dbReference type="AGR" id="HGNC:29808"/>
<dbReference type="CTD" id="84000"/>
<dbReference type="DisGeNET" id="84000"/>
<dbReference type="GeneCards" id="TMPRSS13"/>
<dbReference type="HGNC" id="HGNC:29808">
    <property type="gene designation" value="TMPRSS13"/>
</dbReference>
<dbReference type="HPA" id="ENSG00000137747">
    <property type="expression patterns" value="Tissue enhanced (esophagus, skin)"/>
</dbReference>
<dbReference type="MIM" id="610050">
    <property type="type" value="gene"/>
</dbReference>
<dbReference type="neXtProt" id="NX_Q9BYE2"/>
<dbReference type="OpenTargets" id="ENSG00000137747"/>
<dbReference type="PharmGKB" id="PA142670732"/>
<dbReference type="VEuPathDB" id="HostDB:ENSG00000137747"/>
<dbReference type="eggNOG" id="KOG3627">
    <property type="taxonomic scope" value="Eukaryota"/>
</dbReference>
<dbReference type="GeneTree" id="ENSGT00940000159197"/>
<dbReference type="HOGENOM" id="CLU_006842_19_2_1"/>
<dbReference type="InParanoid" id="Q9BYE2"/>
<dbReference type="OMA" id="PWIYSNM"/>
<dbReference type="OrthoDB" id="10012881at2759"/>
<dbReference type="PAN-GO" id="Q9BYE2">
    <property type="GO annotations" value="0 GO annotations based on evolutionary models"/>
</dbReference>
<dbReference type="TreeFam" id="TF351678"/>
<dbReference type="PathwayCommons" id="Q9BYE2"/>
<dbReference type="SignaLink" id="Q9BYE2"/>
<dbReference type="BioGRID-ORCS" id="84000">
    <property type="hits" value="14 hits in 1146 CRISPR screens"/>
</dbReference>
<dbReference type="ChiTaRS" id="TMPRSS13">
    <property type="organism name" value="human"/>
</dbReference>
<dbReference type="GenomeRNAi" id="84000"/>
<dbReference type="Pharos" id="Q9BYE2">
    <property type="development level" value="Tbio"/>
</dbReference>
<dbReference type="PRO" id="PR:Q9BYE2"/>
<dbReference type="Proteomes" id="UP000005640">
    <property type="component" value="Chromosome 11"/>
</dbReference>
<dbReference type="RNAct" id="Q9BYE2">
    <property type="molecule type" value="protein"/>
</dbReference>
<dbReference type="Bgee" id="ENSG00000137747">
    <property type="expression patterns" value="Expressed in upper arm skin and 132 other cell types or tissues"/>
</dbReference>
<dbReference type="ExpressionAtlas" id="Q9BYE2">
    <property type="expression patterns" value="baseline and differential"/>
</dbReference>
<dbReference type="GO" id="GO:0072562">
    <property type="term" value="C:blood microparticle"/>
    <property type="evidence" value="ECO:0007005"/>
    <property type="project" value="UniProtKB"/>
</dbReference>
<dbReference type="GO" id="GO:0005737">
    <property type="term" value="C:cytoplasm"/>
    <property type="evidence" value="ECO:0007669"/>
    <property type="project" value="UniProtKB-SubCell"/>
</dbReference>
<dbReference type="GO" id="GO:0016020">
    <property type="term" value="C:membrane"/>
    <property type="evidence" value="ECO:0000303"/>
    <property type="project" value="UniProtKB"/>
</dbReference>
<dbReference type="GO" id="GO:0005886">
    <property type="term" value="C:plasma membrane"/>
    <property type="evidence" value="ECO:0007669"/>
    <property type="project" value="UniProtKB-SubCell"/>
</dbReference>
<dbReference type="GO" id="GO:0004252">
    <property type="term" value="F:serine-type endopeptidase activity"/>
    <property type="evidence" value="ECO:0000303"/>
    <property type="project" value="UniProtKB"/>
</dbReference>
<dbReference type="GO" id="GO:0006508">
    <property type="term" value="P:proteolysis"/>
    <property type="evidence" value="ECO:0007669"/>
    <property type="project" value="UniProtKB-KW"/>
</dbReference>
<dbReference type="CDD" id="cd00112">
    <property type="entry name" value="LDLa"/>
    <property type="match status" value="1"/>
</dbReference>
<dbReference type="CDD" id="cd00190">
    <property type="entry name" value="Tryp_SPc"/>
    <property type="match status" value="1"/>
</dbReference>
<dbReference type="FunFam" id="3.10.250.10:FF:000021">
    <property type="entry name" value="Transmembrane serine protease 13"/>
    <property type="match status" value="1"/>
</dbReference>
<dbReference type="FunFam" id="2.40.10.10:FF:000003">
    <property type="entry name" value="Transmembrane serine protease 3"/>
    <property type="match status" value="1"/>
</dbReference>
<dbReference type="Gene3D" id="3.10.250.10">
    <property type="entry name" value="SRCR-like domain"/>
    <property type="match status" value="1"/>
</dbReference>
<dbReference type="Gene3D" id="2.40.10.10">
    <property type="entry name" value="Trypsin-like serine proteases"/>
    <property type="match status" value="1"/>
</dbReference>
<dbReference type="InterPro" id="IPR002172">
    <property type="entry name" value="LDrepeatLR_classA_rpt"/>
</dbReference>
<dbReference type="InterPro" id="IPR009003">
    <property type="entry name" value="Peptidase_S1_PA"/>
</dbReference>
<dbReference type="InterPro" id="IPR043504">
    <property type="entry name" value="Peptidase_S1_PA_chymotrypsin"/>
</dbReference>
<dbReference type="InterPro" id="IPR001314">
    <property type="entry name" value="Peptidase_S1A"/>
</dbReference>
<dbReference type="InterPro" id="IPR017327">
    <property type="entry name" value="Peptidase_S1A_TMPRSS13"/>
</dbReference>
<dbReference type="InterPro" id="IPR001190">
    <property type="entry name" value="SRCR"/>
</dbReference>
<dbReference type="InterPro" id="IPR036772">
    <property type="entry name" value="SRCR-like_dom_sf"/>
</dbReference>
<dbReference type="InterPro" id="IPR001254">
    <property type="entry name" value="Trypsin_dom"/>
</dbReference>
<dbReference type="InterPro" id="IPR018114">
    <property type="entry name" value="TRYPSIN_HIS"/>
</dbReference>
<dbReference type="InterPro" id="IPR033116">
    <property type="entry name" value="TRYPSIN_SER"/>
</dbReference>
<dbReference type="PANTHER" id="PTHR24252">
    <property type="entry name" value="ACROSIN-RELATED"/>
    <property type="match status" value="1"/>
</dbReference>
<dbReference type="PANTHER" id="PTHR24252:SF27">
    <property type="entry name" value="TRANSMEMBRANE PROTEASE SERINE 3-LIKE"/>
    <property type="match status" value="1"/>
</dbReference>
<dbReference type="Pfam" id="PF15494">
    <property type="entry name" value="SRCR_2"/>
    <property type="match status" value="1"/>
</dbReference>
<dbReference type="Pfam" id="PF00089">
    <property type="entry name" value="Trypsin"/>
    <property type="match status" value="1"/>
</dbReference>
<dbReference type="PIRSF" id="PIRSF037935">
    <property type="entry name" value="TMPRSS13"/>
    <property type="match status" value="1"/>
</dbReference>
<dbReference type="PRINTS" id="PR00722">
    <property type="entry name" value="CHYMOTRYPSIN"/>
</dbReference>
<dbReference type="SMART" id="SM00202">
    <property type="entry name" value="SR"/>
    <property type="match status" value="1"/>
</dbReference>
<dbReference type="SMART" id="SM00020">
    <property type="entry name" value="Tryp_SPc"/>
    <property type="match status" value="1"/>
</dbReference>
<dbReference type="SUPFAM" id="SSF56487">
    <property type="entry name" value="SRCR-like"/>
    <property type="match status" value="1"/>
</dbReference>
<dbReference type="SUPFAM" id="SSF50494">
    <property type="entry name" value="Trypsin-like serine proteases"/>
    <property type="match status" value="1"/>
</dbReference>
<dbReference type="PROSITE" id="PS50287">
    <property type="entry name" value="SRCR_2"/>
    <property type="match status" value="1"/>
</dbReference>
<dbReference type="PROSITE" id="PS50240">
    <property type="entry name" value="TRYPSIN_DOM"/>
    <property type="match status" value="1"/>
</dbReference>
<dbReference type="PROSITE" id="PS00134">
    <property type="entry name" value="TRYPSIN_HIS"/>
    <property type="match status" value="1"/>
</dbReference>
<dbReference type="PROSITE" id="PS00135">
    <property type="entry name" value="TRYPSIN_SER"/>
    <property type="match status" value="1"/>
</dbReference>
<protein>
    <recommendedName>
        <fullName>Transmembrane protease serine 13</fullName>
        <ecNumber evidence="10 11">3.4.21.-</ecNumber>
    </recommendedName>
    <alternativeName>
        <fullName>Membrane-type mosaic serine protease</fullName>
        <shortName>Mosaic serine protease</shortName>
    </alternativeName>
</protein>
<proteinExistence type="evidence at protein level"/>
<evidence type="ECO:0000250" key="1"/>
<evidence type="ECO:0000250" key="2">
    <source>
        <dbReference type="UniProtKB" id="Q5U405"/>
    </source>
</evidence>
<evidence type="ECO:0000255" key="3"/>
<evidence type="ECO:0000255" key="4">
    <source>
        <dbReference type="PROSITE-ProRule" id="PRU00196"/>
    </source>
</evidence>
<evidence type="ECO:0000255" key="5">
    <source>
        <dbReference type="PROSITE-ProRule" id="PRU00274"/>
    </source>
</evidence>
<evidence type="ECO:0000256" key="6">
    <source>
        <dbReference type="SAM" id="MobiDB-lite"/>
    </source>
</evidence>
<evidence type="ECO:0000269" key="7">
    <source>
    </source>
</evidence>
<evidence type="ECO:0000269" key="8">
    <source>
    </source>
</evidence>
<evidence type="ECO:0000269" key="9">
    <source>
    </source>
</evidence>
<evidence type="ECO:0000269" key="10">
    <source>
    </source>
</evidence>
<evidence type="ECO:0000269" key="11">
    <source>
    </source>
</evidence>
<evidence type="ECO:0000303" key="12">
    <source>
    </source>
</evidence>
<evidence type="ECO:0000303" key="13">
    <source>
    </source>
</evidence>
<evidence type="ECO:0000303" key="14">
    <source>
    </source>
</evidence>
<evidence type="ECO:0000303" key="15">
    <source ref="3"/>
</evidence>
<evidence type="ECO:0000305" key="16"/>
<organism>
    <name type="scientific">Homo sapiens</name>
    <name type="common">Human</name>
    <dbReference type="NCBI Taxonomy" id="9606"/>
    <lineage>
        <taxon>Eukaryota</taxon>
        <taxon>Metazoa</taxon>
        <taxon>Chordata</taxon>
        <taxon>Craniata</taxon>
        <taxon>Vertebrata</taxon>
        <taxon>Euteleostomi</taxon>
        <taxon>Mammalia</taxon>
        <taxon>Eutheria</taxon>
        <taxon>Euarchontoglires</taxon>
        <taxon>Primates</taxon>
        <taxon>Haplorrhini</taxon>
        <taxon>Catarrhini</taxon>
        <taxon>Hominidae</taxon>
        <taxon>Homo</taxon>
    </lineage>
</organism>
<name>TMPSD_HUMAN</name>
<comment type="function">
    <text evidence="2 8 9 10">Serine protease (PubMed:20977675, PubMed:28710277, PubMed:34562451). Cleaves the proform of PRSS8/prostasin to form the active protein (PubMed:34562451). Cleaves the proform of HGF to form the active protein which promotes MAPK signaling (PubMed:20977675). Promotes the formation of the stratum corneum and subsequently the epidermal barrier in embryos (By similarity).</text>
</comment>
<comment type="activity regulation">
    <text evidence="8">Cleavage of HGF is inhibited by SPINT1/HAI-1 via the BPTI/Kunitz inhibitor 1 domain.</text>
</comment>
<comment type="subunit">
    <text evidence="9 10">Interacts with SPINT1/HAI-1; the interaction promotes the phosphorylation and cell membrane localization of TMPRSS13 (PubMed:28710277). Interacts with SPINT2/HAI-2; the interaction promotes the phosphorylation and cell membrane localization of TMPRSS13 (PubMed:28710277, PubMed:34562451).</text>
</comment>
<comment type="subcellular location">
    <subcellularLocation>
        <location evidence="9 10 11">Cell membrane</location>
        <topology evidence="3">Single-pass type II membrane protein</topology>
    </subcellularLocation>
    <subcellularLocation>
        <location evidence="11">Secreted</location>
    </subcellularLocation>
    <subcellularLocation>
        <location evidence="9">Cytoplasm</location>
    </subcellularLocation>
    <text evidence="9 10 11">The non-phosphorylated, inactive full length protein localizes intracellularly (PubMed:28710277). N-glycosylation and phosphorylation is required for trafficking to the cell surface (PubMed:28710277, PubMed:34562451, PubMed:35796294). Interaction with SPINT1/HAI-1 and SPINT2/HAI-2 facilitate its translocation to the cell surface (PubMed:34562451, PubMed:35796294). Proteolytic cleavage is required for secretion (PubMed:35796294).</text>
</comment>
<comment type="alternative products">
    <event type="alternative splicing"/>
    <isoform>
        <id>Q9BYE2-1</id>
        <name>1</name>
        <name evidence="12">MSPL</name>
        <sequence type="displayed"/>
    </isoform>
    <isoform>
        <id>Q9BYE2-2</id>
        <name>2</name>
        <sequence type="described" ref="VSP_013103 VSP_013104"/>
    </isoform>
    <isoform>
        <id>Q9BYE2-3</id>
        <name>3</name>
        <name evidence="12">MSPS</name>
        <sequence type="described" ref="VSP_013099 VSP_013102"/>
    </isoform>
    <isoform>
        <id>Q9BYE2-4</id>
        <name>4</name>
        <sequence type="described" ref="VSP_013100 VSP_013101"/>
    </isoform>
    <isoform>
        <id>Q9BYE2-6</id>
        <name>6</name>
        <sequence type="described" ref="VSP_013102"/>
    </isoform>
</comment>
<comment type="tissue specificity">
    <text evidence="8">Expressed in placenta.</text>
</comment>
<comment type="tissue specificity">
    <molecule>Isoform 1</molecule>
    <text evidence="7">Predominantly expressed in lung, placenta, pancreas, and prostate.</text>
</comment>
<comment type="tissue specificity">
    <molecule>Isoform 3</molecule>
    <text evidence="7">Expressed in lung, placenta, pancreas, and prostate (PubMed:11267681). Weakly expressed in testis and peripheral blood lymphocytes (PubMed:11267681).</text>
</comment>
<comment type="PTM">
    <text evidence="9 10">The inactive zymogen is post-translationally modified and then trafficked to the cell surface, whereby it undergoes autocatalytic cleavage resulting in an activated form that is released extracellularly.</text>
</comment>
<comment type="PTM">
    <text evidence="9 10 11">Phosphorylation is required for localization at the cell surface (PubMed:28710277, PubMed:34562451). Phosphorylation increases following inhibition of protease activity by SPINT2/HAI-2 (PubMed:35796294).</text>
</comment>
<comment type="PTM">
    <text evidence="9 10">N-glycosylation of Asn-405 and Asn-445 is required for exit from the endoplasmic reticulum and trafficking to the cell surface (PubMed:28710277, PubMed:34562451). Also required for autocleavage of the zymogen, activation and secretion of the mature protein (PubMed:34562451).</text>
</comment>
<comment type="polymorphism">
    <text evidence="7">The repeat A-S-P-A-[GLQR] is polymorphic and the number of copies varies between 12 to 14.</text>
</comment>
<comment type="similarity">
    <text evidence="5">Belongs to the peptidase S1 family.</text>
</comment>
<comment type="caution">
    <text evidence="16">Was termed TMPRSS6 (Ref.3).</text>
</comment>
<keyword id="KW-0025">Alternative splicing</keyword>
<keyword id="KW-1003">Cell membrane</keyword>
<keyword id="KW-0963">Cytoplasm</keyword>
<keyword id="KW-1015">Disulfide bond</keyword>
<keyword id="KW-0325">Glycoprotein</keyword>
<keyword id="KW-0378">Hydrolase</keyword>
<keyword id="KW-0472">Membrane</keyword>
<keyword id="KW-0645">Protease</keyword>
<keyword id="KW-1267">Proteomics identification</keyword>
<keyword id="KW-1185">Reference proteome</keyword>
<keyword id="KW-0677">Repeat</keyword>
<keyword id="KW-0964">Secreted</keyword>
<keyword id="KW-0720">Serine protease</keyword>
<keyword id="KW-0735">Signal-anchor</keyword>
<keyword id="KW-0812">Transmembrane</keyword>
<keyword id="KW-1133">Transmembrane helix</keyword>